<organism evidence="20">
    <name type="scientific">Homo sapiens</name>
    <name type="common">Human</name>
    <dbReference type="NCBI Taxonomy" id="9606"/>
    <lineage>
        <taxon>Eukaryota</taxon>
        <taxon>Metazoa</taxon>
        <taxon>Chordata</taxon>
        <taxon>Craniata</taxon>
        <taxon>Vertebrata</taxon>
        <taxon>Euteleostomi</taxon>
        <taxon>Mammalia</taxon>
        <taxon>Eutheria</taxon>
        <taxon>Euarchontoglires</taxon>
        <taxon>Primates</taxon>
        <taxon>Haplorrhini</taxon>
        <taxon>Catarrhini</taxon>
        <taxon>Hominidae</taxon>
        <taxon>Homo</taxon>
    </lineage>
</organism>
<keyword id="KW-0238">DNA-binding</keyword>
<keyword id="KW-0496">Mitochondrion</keyword>
<keyword id="KW-0539">Nucleus</keyword>
<keyword id="KW-0892">Osteogenesis</keyword>
<keyword id="KW-1185">Reference proteome</keyword>
<keyword id="KW-0964">Secreted</keyword>
<keyword id="KW-0804">Transcription</keyword>
<keyword id="KW-0805">Transcription regulation</keyword>
<name>MOTSC_HUMAN</name>
<proteinExistence type="evidence at protein level"/>
<dbReference type="EMBL" id="KP715230">
    <property type="protein sequence ID" value="AJM13597.1"/>
    <property type="molecule type" value="Genomic_DNA"/>
</dbReference>
<dbReference type="EMBL" id="J01415">
    <property type="status" value="NOT_ANNOTATED_CDS"/>
    <property type="molecule type" value="Genomic_DNA"/>
</dbReference>
<dbReference type="FunCoup" id="A0A0C5B5G6">
    <property type="interactions" value="23"/>
</dbReference>
<dbReference type="BioMuta" id="HGNC:7470"/>
<dbReference type="AGR" id="HGNC:7470"/>
<dbReference type="GeneCards" id="MT-RNR1"/>
<dbReference type="HGNC" id="HGNC:7470">
    <property type="gene designation" value="MT-RNR1"/>
</dbReference>
<dbReference type="MalaCards" id="MT-RNR1"/>
<dbReference type="MIM" id="561000">
    <property type="type" value="gene"/>
</dbReference>
<dbReference type="neXtProt" id="NX_A0A0C5B5G6"/>
<dbReference type="Orphanet" id="551">
    <property type="disease" value="MERRF"/>
</dbReference>
<dbReference type="Orphanet" id="90641">
    <property type="disease" value="Rare mitochondrial non-syndromic sensorineural deafness"/>
</dbReference>
<dbReference type="InParanoid" id="A0A0C5B5G6"/>
<dbReference type="PAN-GO" id="A0A0C5B5G6">
    <property type="GO annotations" value="3 GO annotations based on evolutionary models"/>
</dbReference>
<dbReference type="ChiTaRS" id="RNR1">
    <property type="organism name" value="human"/>
</dbReference>
<dbReference type="Pharos" id="A0A0C5B5G6">
    <property type="development level" value="Tbio"/>
</dbReference>
<dbReference type="PRO" id="PR:A0A0C5B5G6"/>
<dbReference type="Proteomes" id="UP000005640">
    <property type="component" value="Mitochondrion MT"/>
</dbReference>
<dbReference type="GO" id="GO:0005615">
    <property type="term" value="C:extracellular space"/>
    <property type="evidence" value="ECO:0000314"/>
    <property type="project" value="UniProtKB"/>
</dbReference>
<dbReference type="GO" id="GO:0005739">
    <property type="term" value="C:mitochondrion"/>
    <property type="evidence" value="ECO:0000314"/>
    <property type="project" value="UniProtKB"/>
</dbReference>
<dbReference type="GO" id="GO:0005634">
    <property type="term" value="C:nucleus"/>
    <property type="evidence" value="ECO:0000314"/>
    <property type="project" value="UniProtKB"/>
</dbReference>
<dbReference type="GO" id="GO:0003677">
    <property type="term" value="F:DNA binding"/>
    <property type="evidence" value="ECO:0000314"/>
    <property type="project" value="UniProtKB"/>
</dbReference>
<dbReference type="GO" id="GO:0140297">
    <property type="term" value="F:DNA-binding transcription factor binding"/>
    <property type="evidence" value="ECO:0000353"/>
    <property type="project" value="UniProtKB"/>
</dbReference>
<dbReference type="GO" id="GO:0032147">
    <property type="term" value="P:activation of protein kinase activity"/>
    <property type="evidence" value="ECO:0000314"/>
    <property type="project" value="UniProtKB"/>
</dbReference>
<dbReference type="GO" id="GO:2001145">
    <property type="term" value="P:negative regulation of phosphatidylinositol-3,4,5-trisphosphate 5-phosphatase activity"/>
    <property type="evidence" value="ECO:0000314"/>
    <property type="project" value="UniProtKB"/>
</dbReference>
<dbReference type="GO" id="GO:0001649">
    <property type="term" value="P:osteoblast differentiation"/>
    <property type="evidence" value="ECO:0000314"/>
    <property type="project" value="UniProtKB"/>
</dbReference>
<dbReference type="GO" id="GO:0033687">
    <property type="term" value="P:osteoblast proliferation"/>
    <property type="evidence" value="ECO:0000314"/>
    <property type="project" value="UniProtKB"/>
</dbReference>
<dbReference type="GO" id="GO:0071902">
    <property type="term" value="P:positive regulation of protein serine/threonine kinase activity"/>
    <property type="evidence" value="ECO:0000314"/>
    <property type="project" value="UniProtKB"/>
</dbReference>
<dbReference type="GO" id="GO:0072522">
    <property type="term" value="P:purine-containing compound biosynthetic process"/>
    <property type="evidence" value="ECO:0000314"/>
    <property type="project" value="UniProtKB"/>
</dbReference>
<dbReference type="GO" id="GO:0043610">
    <property type="term" value="P:regulation of carbohydrate utilization"/>
    <property type="evidence" value="ECO:0000314"/>
    <property type="project" value="UniProtKB"/>
</dbReference>
<dbReference type="GO" id="GO:0006357">
    <property type="term" value="P:regulation of transcription by RNA polymerase II"/>
    <property type="evidence" value="ECO:0000314"/>
    <property type="project" value="UniProtKB"/>
</dbReference>
<dbReference type="GO" id="GO:0048630">
    <property type="term" value="P:skeletal muscle tissue growth"/>
    <property type="evidence" value="ECO:0000314"/>
    <property type="project" value="UniProtKB"/>
</dbReference>
<dbReference type="InterPro" id="IPR054130">
    <property type="entry name" value="MT-RNR1"/>
</dbReference>
<dbReference type="Pfam" id="PF21945">
    <property type="entry name" value="MT-RNR1"/>
    <property type="match status" value="1"/>
</dbReference>
<geneLocation type="mitochondrion"/>
<evidence type="ECO:0000269" key="1">
    <source>
    </source>
</evidence>
<evidence type="ECO:0000269" key="2">
    <source>
    </source>
</evidence>
<evidence type="ECO:0000269" key="3">
    <source>
    </source>
</evidence>
<evidence type="ECO:0000269" key="4">
    <source>
    </source>
</evidence>
<evidence type="ECO:0000269" key="5">
    <source>
    </source>
</evidence>
<evidence type="ECO:0000269" key="6">
    <source>
    </source>
</evidence>
<evidence type="ECO:0000269" key="7">
    <source>
    </source>
</evidence>
<evidence type="ECO:0000269" key="8">
    <source>
    </source>
</evidence>
<evidence type="ECO:0000269" key="9">
    <source>
    </source>
</evidence>
<evidence type="ECO:0000269" key="10">
    <source>
    </source>
</evidence>
<evidence type="ECO:0000269" key="11">
    <source>
    </source>
</evidence>
<evidence type="ECO:0000269" key="12">
    <source>
    </source>
</evidence>
<evidence type="ECO:0000269" key="13">
    <source>
    </source>
</evidence>
<evidence type="ECO:0000269" key="14">
    <source>
    </source>
</evidence>
<evidence type="ECO:0000269" key="15">
    <source>
    </source>
</evidence>
<evidence type="ECO:0000269" key="16">
    <source>
    </source>
</evidence>
<evidence type="ECO:0000303" key="17">
    <source>
    </source>
</evidence>
<evidence type="ECO:0000305" key="18"/>
<evidence type="ECO:0000305" key="19">
    <source>
    </source>
</evidence>
<evidence type="ECO:0000312" key="20">
    <source>
        <dbReference type="EMBL" id="AJM13597.1"/>
    </source>
</evidence>
<evidence type="ECO:0000312" key="21">
    <source>
        <dbReference type="HGNC" id="HGNC:7470"/>
    </source>
</evidence>
<comment type="function">
    <text evidence="1 4 5 6 8 14 16">Regulates insulin sensitivity and metabolic homeostasis (PubMed:25738459, PubMed:33468709). Inhibits the folate cycle, thereby reducing de novo purine biosynthesis which leads to the accumulation of the de novo purine synthesis intermediate 5-aminoimidazole-4-carboxamide (AICAR) and the activation of the metabolic regulator 5'-AMP-activated protein kinase (AMPK) (PubMed:25738459). Protects against age-dependent and diet-induced insulin resistance as well as diet-induced obesity (PubMed:25738459). In response to metabolic stress, translocates to the nucleus where it binds to antioxidant response elements (ARE) present in the promoter regions of a number of genes and plays a role in regulating nuclear gene expression in an NFE2L2-dependent manner and increasing cellular resistance to metabolic stress (PubMed:29983246). Increases mitochondrial respiration and levels of CPT1A and cytokines IL1B, IL6, IL8, IL10 and TNF in senescent cells (PubMed:29886458). Increases activity of the serine/threonine protein kinase complex mTORC2 and reduces activity of the PTEN phosphatase, thus promoting phosphorylation of AKT (PubMed:33554779). This promotes AKT-mediated phosphorylation of transcription factor FOXO1 which reduces FOXO1 activity, leading to reduced levels of MSTN and promotion of skeletal muscle growth (PubMed:33554779). Promotes osteogenic differentiation of bone marrow mesenchymal stem cells via the TGFB/SMAD pathway (PubMed:30468456). Promotes osteoblast proliferation and osteoblast synthesis of type I collagens COL1A1 and COL1A2 via the TGFB/SMAD pathway (PubMed:31081069).</text>
</comment>
<comment type="subunit">
    <text evidence="5">Interacts with transcription factors ATF1 and NFE2L2/NRF2; the interactions occur in the nucleus following metabolic stress (PubMed:29983246). Also interacts with transcription factor NFE2L1/NRF1 (PubMed:29983246).</text>
</comment>
<comment type="subcellular location">
    <subcellularLocation>
        <location evidence="1">Secreted</location>
    </subcellularLocation>
    <subcellularLocation>
        <location evidence="5">Mitochondrion</location>
    </subcellularLocation>
    <subcellularLocation>
        <location evidence="5 15">Nucleus</location>
    </subcellularLocation>
    <text evidence="5">Translocates to the nucleus in response to metabolic stress in an AMPK-dependent manner.</text>
</comment>
<comment type="tissue specificity">
    <text evidence="1 13">Detected in plasma (at protein level) (PubMed:25738459, PubMed:32182209). Also expressed in skeletal muscle (at protein level) (PubMed:32182209).</text>
</comment>
<comment type="developmental stage">
    <text evidence="13">Circulating plasma levels decrease with age while levels in skeletal muscle increase with age (at protein level).</text>
</comment>
<comment type="induction">
    <text evidence="4 15">By exercise (PubMed:33473109). Up-regulated during cellular senescence (PubMed:29886458).</text>
</comment>
<comment type="miscellaneous">
    <text evidence="3">Increases survival and decreases bacterial load in mice infected with methicillin-resistant Staphylococcus aureus (MRSA) (PubMed:29096170). Reduces serum levels of inflammatory cytokines such as TNF and IL6 and increases levels of the anti-inflammatory cytokine IL10 (PubMed:29096170). Enhances the phagocytic and bactericidal ability of macrophages and suppresses MAPK pathways while enhancing activation of STAT3 and AHR (PubMed:29096170).</text>
</comment>
<comment type="miscellaneous">
    <text evidence="12">Protects mice against lipopolysaccharide-induced acute lung injury (PubMed:31931370). Reduces body weight loss and pulmonary edema, inhibits neutrophilic tissue infiltration in lung tissue, reduces inflammatory cytokine levels, increases levels of anti-inflammatory cytokines and superoxide dismutase and down-regulates the expression of chemokine CXCL1/CINC1 and adhesion molecule ICAM1 in lung tissues (PubMed:31931370).</text>
</comment>
<comment type="miscellaneous">
    <text evidence="9">Promotes cold adaptation in mice following acute cold exposure (PubMed:31109005). Prevents acute cold-induced liver lipid deposition and increases brown fat activation and white fat browning upon acute cold exposure (PubMed:31109005). Also increases expression of thermogenic genes in vitro (PubMed:31109005).</text>
</comment>
<comment type="miscellaneous">
    <text evidence="10">In a mouse osteolysis model, rescues bone loss, protects bone mass and alleviates inflammation (PubMed:31369811). Decreases TNFSF11/RANKL expression, increases TNFRSF11B/OPG expression and reduces the number of pro-inflammatory macrophages (PubMed:31369811).</text>
</comment>
<comment type="miscellaneous">
    <text evidence="7">In ovarietomized mice, prevents body weight gain, reduces fat mass and adipocyte size, enhances brown fat function, decreases plasma lipid and hepatic triacylglycerol levels, and prevents insulin resistance.</text>
</comment>
<comment type="miscellaneous">
    <text evidence="14">Reduces weight gain in male mice fed a high-fat diet and enhances glucose clearance (PubMed:33468709). Does not reduce weight gain in females on a high-fat diet (PubMed:33468709).</text>
</comment>
<comment type="miscellaneous">
    <text evidence="15">Improves physical performance in both young and aging mice and enhances skeletal muscle adaptation to metabolic stress in vitro.</text>
</comment>
<comment type="miscellaneous">
    <text evidence="11">Reduces vascular calcification (VC) in a rat VC model (PubMed:31694019). Reverses VC-induced reduction in AMPK phosphorylation and decreases expression of receptors AGTR1 and EDNRB (PubMed:31694019).</text>
</comment>
<comment type="caution">
    <text evidence="19">This peptide has been shown to be biologically active but is the product of a mitochondrial gene. Usage of the mitochondrial genetic code yields tandem start and stop codons so translation must occur in the cytoplasm. The mechanisms allowing the production and secretion of the peptide remain unclear.</text>
</comment>
<accession>A0A0C5B5G6</accession>
<feature type="chain" id="PRO_0000435952" description="Mitochondrial-derived peptide MOTS-c" evidence="18">
    <location>
        <begin position="1"/>
        <end position="16"/>
    </location>
</feature>
<feature type="sequence variant" id="VAR_075685" description="Specific to the Northeast Asian population; associated with increased susceptibility of sedentary males to type 2 diabetes; increased plasma levels of MOTS-c peptide." evidence="2 14">
    <original>K</original>
    <variation>Q</variation>
    <location>
        <position position="14"/>
    </location>
</feature>
<feature type="mutagenesis site" description="Lack of enhanced glycolytic response to glucose stimulation." evidence="1">
    <original>E</original>
    <variation>A</variation>
    <location>
        <position position="5"/>
    </location>
</feature>
<feature type="mutagenesis site" description="Lack of enhanced glycolytic response to glucose stimulation." evidence="1">
    <original>G</original>
    <variation>A</variation>
    <location>
        <position position="7"/>
    </location>
</feature>
<feature type="mutagenesis site" description="Abolishes nuclear localization and DNA-binding activity." evidence="5">
    <original>YPRK</original>
    <variation>AAAA</variation>
    <location>
        <begin position="11"/>
        <end position="14"/>
    </location>
</feature>
<feature type="mutagenesis site" description="Does not affect nuclear localization or interaction with NFE2L2 but abolishes DNA-binding activity." evidence="5">
    <original>RKLR</original>
    <variation>AAAA</variation>
    <location>
        <begin position="13"/>
        <end position="16"/>
    </location>
</feature>
<gene>
    <name evidence="21" type="primary">MT-RNR1</name>
</gene>
<protein>
    <recommendedName>
        <fullName evidence="17">Mitochondrial-derived peptide MOTS-c</fullName>
    </recommendedName>
    <alternativeName>
        <fullName evidence="17">Mitochondrial open reading frame of the 12S rRNA-c</fullName>
    </alternativeName>
</protein>
<reference evidence="20" key="1">
    <citation type="journal article" date="2015" name="Cell Metab.">
        <title>The mitochondrial-derived peptide MOTS-c promotes metabolic homeostasis and reduces obesity and insulin resistance.</title>
        <authorList>
            <person name="Lee C."/>
            <person name="Zeng J."/>
            <person name="Drew B.G."/>
            <person name="Sallam T."/>
            <person name="Martin-Montalvo A."/>
            <person name="Wan J."/>
            <person name="Kim S.-J."/>
            <person name="Mehta H."/>
            <person name="Hevener A.L."/>
            <person name="de Cabo R."/>
            <person name="Cohen P."/>
        </authorList>
    </citation>
    <scope>NUCLEOTIDE SEQUENCE [GENOMIC DNA]</scope>
    <scope>FUNCTION</scope>
    <scope>SUBCELLULAR LOCATION</scope>
    <scope>TISSUE SPECIFICITY</scope>
    <scope>MUTAGENESIS OF GLU-5 AND GLY-7</scope>
</reference>
<reference key="2">
    <citation type="journal article" date="1981" name="Nature">
        <title>Sequence and organization of the human mitochondrial genome.</title>
        <authorList>
            <person name="Anderson S."/>
            <person name="Bankier A.T."/>
            <person name="Barrell B.G."/>
            <person name="de Bruijn M.H.L."/>
            <person name="Coulson A.R."/>
            <person name="Drouin J."/>
            <person name="Eperon I.C."/>
            <person name="Nierlich D.P."/>
            <person name="Roe B.A."/>
            <person name="Sanger F."/>
            <person name="Schreier P.H."/>
            <person name="Smith A.J.H."/>
            <person name="Staden R."/>
            <person name="Young I.G."/>
        </authorList>
    </citation>
    <scope>NUCLEOTIDE SEQUENCE [LARGE SCALE GENOMIC DNA]</scope>
</reference>
<reference key="3">
    <citation type="journal article" date="2017" name="Mol. Immunol.">
        <title>MOTS-c peptide increases survival and decreases bacterial load in mice infected with MRSA.</title>
        <authorList>
            <person name="Zhai D."/>
            <person name="Ye Z."/>
            <person name="Jiang Y."/>
            <person name="Xu C."/>
            <person name="Ruan B."/>
            <person name="Yang Y."/>
            <person name="Lei X."/>
            <person name="Xiang A."/>
            <person name="Lu H."/>
            <person name="Zhu Z."/>
            <person name="Yan Z."/>
            <person name="Wei D."/>
            <person name="Li Q."/>
            <person name="Wang L."/>
            <person name="Lu Z."/>
        </authorList>
    </citation>
    <scope>ROLE IN MRSA INFECTION</scope>
</reference>
<reference key="4">
    <citation type="journal article" date="2018" name="Aging (Albany NY)">
        <title>Mitochondrial peptides modulate mitochondrial function during cellular senescence.</title>
        <authorList>
            <person name="Kim S.J."/>
            <person name="Mehta H.H."/>
            <person name="Wan J."/>
            <person name="Kuehnemann C."/>
            <person name="Chen J."/>
            <person name="Hu J.F."/>
            <person name="Hoffman A.R."/>
            <person name="Cohen P."/>
        </authorList>
    </citation>
    <scope>FUNCTION</scope>
    <scope>INDUCTION</scope>
</reference>
<reference key="5">
    <citation type="journal article" date="2018" name="Cell Metab.">
        <title>The Mitochondrial-Encoded Peptide MOTS-c Translocates to the Nucleus to Regulate Nuclear Gene Expression in Response to Metabolic Stress.</title>
        <authorList>
            <person name="Kim K.H."/>
            <person name="Son J.M."/>
            <person name="Benayoun B.A."/>
            <person name="Lee C."/>
        </authorList>
    </citation>
    <scope>FUNCTION</scope>
    <scope>INTERACTION WITH ATF1; NFE2L1 AND NFE2L2</scope>
    <scope>SUBCELLULAR LOCATION</scope>
    <scope>MUTAGENESIS OF 11-TYR--LYS-14 AND 13-ARG--ARG-16</scope>
</reference>
<reference key="6">
    <citation type="journal article" date="2018" name="Eur. Rev. Med. Pharmacol. Sci.">
        <title>MOTS-c improves osteoporosis by promoting osteogenic differentiation of bone marrow mesenchymal stem cells via TGF-beta/Smad pathway.</title>
        <authorList>
            <person name="Hu B.T."/>
            <person name="Chen W.Z."/>
        </authorList>
    </citation>
    <scope>FUNCTION</scope>
</reference>
<reference key="7">
    <citation type="journal article" date="2019" name="Eur. Rev. Med. Pharmacol. Sci.">
        <title>MOTS-c improves osteoporosis by promoting the synthesis of type I collagen in osteoblasts via TGF-beta/SMAD signaling pathway.</title>
        <authorList>
            <person name="Che N."/>
            <person name="Qiu W."/>
            <person name="Wang J.K."/>
            <person name="Sun X.X."/>
            <person name="Xu L.X."/>
            <person name="Liu R."/>
            <person name="Gu L."/>
        </authorList>
    </citation>
    <scope>FUNCTION</scope>
</reference>
<reference key="8">
    <citation type="journal article" date="2019" name="Int. J. Mol. Sci.">
        <title>Mitochondrial-Derived Peptide MOTS-c Increases Adipose Thermogenic Activation to Promote Cold Adaptation.</title>
        <authorList>
            <person name="Lu H."/>
            <person name="Tang S."/>
            <person name="Xue C."/>
            <person name="Liu Y."/>
            <person name="Wang J."/>
            <person name="Zhang W."/>
            <person name="Luo W."/>
            <person name="Chen J."/>
        </authorList>
    </citation>
    <scope>ROLE IN COLD ADAPTATION</scope>
</reference>
<reference key="9">
    <citation type="journal article" date="2019" name="J. Mol. Med.">
        <title>MOTS-c peptide regulates adipose homeostasis to prevent ovariectomy-induced metabolic dysfunction.</title>
        <authorList>
            <person name="Lu H."/>
            <person name="Wei M."/>
            <person name="Zhai Y."/>
            <person name="Li Q."/>
            <person name="Ye Z."/>
            <person name="Wang L."/>
            <person name="Luo W."/>
            <person name="Chen J."/>
            <person name="Lu Z."/>
        </authorList>
    </citation>
    <scope>ROLE IN ADIPOSE METABOLISM</scope>
</reference>
<reference key="10">
    <citation type="journal article" date="2019" name="Pharmacol. Res.">
        <title>MOTS-c inhibits Osteolysis in the Mouse Calvaria by affecting osteocyte-osteoclast crosstalk and inhibiting inflammation.</title>
        <authorList>
            <person name="Yan Z."/>
            <person name="Zhu S."/>
            <person name="Wang H."/>
            <person name="Wang L."/>
            <person name="Du T."/>
            <person name="Ye Z."/>
            <person name="Zhai D."/>
            <person name="Zhu Z."/>
            <person name="Tian X."/>
            <person name="Lu Z."/>
            <person name="Cao X."/>
        </authorList>
    </citation>
    <scope>ROLE IN OSTEOLYSIS</scope>
</reference>
<reference key="11">
    <citation type="journal article" date="2020" name="Aging (Albany NY)">
        <title>Increased expression of the mitochondrial derived peptide, MOTS-c, inb skeletal muscle of healthy aging men is associated with myofiber composition.</title>
        <authorList>
            <person name="D'Souza R.F."/>
            <person name="Woodhead J.S.T."/>
            <person name="Hedges C.P."/>
            <person name="Zeng N."/>
            <person name="Wan J."/>
            <person name="Kumagai H."/>
            <person name="Lee C."/>
            <person name="Cohen P."/>
            <person name="Cameron-Smith D."/>
            <person name="Mitchell C.J."/>
            <person name="Merry T.L."/>
        </authorList>
    </citation>
    <scope>TISSUE SPECIFICITY</scope>
    <scope>DEVELOPMENTAL STAGE</scope>
</reference>
<reference key="12">
    <citation type="journal article" date="2020" name="Cardiorenal Med.">
        <title>Mitochondrial-Derived Peptide MOTS-c Attenuates Vascular Calcification and Secondary Myocardial Remodeling via Adenosine Monophosphate-Activated Protein Kinase Signaling Pathway.</title>
        <authorList>
            <person name="Wei M."/>
            <person name="Gan L."/>
            <person name="Liu Z."/>
            <person name="Liu L."/>
            <person name="Chang J.R."/>
            <person name="Yin D.C."/>
            <person name="Cao H.L."/>
            <person name="Su X.L."/>
            <person name="Smith W.W."/>
        </authorList>
    </citation>
    <scope>ROLE IN VASCULAR CALCIFICATION</scope>
</reference>
<reference key="13">
    <citation type="journal article" date="2020" name="Int. Immunopharmacol.">
        <title>Protective effect of MOTS-c on acute lung injury induced by lipopolysaccharide in mice.</title>
        <authorList>
            <person name="Xinqiang Y."/>
            <person name="Quan C."/>
            <person name="Yuanyuan J."/>
            <person name="Hanmei X."/>
        </authorList>
    </citation>
    <scope>ROLE IN LUNG INJURY PROTECTION</scope>
</reference>
<reference key="14">
    <citation type="journal article" date="2021" name="Am. J. Physiol.">
        <title>MOTS-c reduces myostatin and muscle atrophy signaling.</title>
        <authorList>
            <person name="Kumagai H."/>
            <person name="Coelho A.R."/>
            <person name="Wan J."/>
            <person name="Mehta H."/>
            <person name="Yen K."/>
            <person name="Huang A."/>
            <person name="Zempo H."/>
            <person name="Fuku N."/>
            <person name="Maeda S."/>
            <person name="Oliveira P.J."/>
            <person name="Cohen P."/>
            <person name="Kim S.J."/>
        </authorList>
    </citation>
    <scope>FUNCTION</scope>
</reference>
<reference key="15">
    <citation type="journal article" date="2021" name="Nat. Commun.">
        <title>MOTS-c is an exercise-induced mitochondrial-encoded regulator of age-dependent physical decline and muscle homeostasis.</title>
        <authorList>
            <person name="Reynolds J.C."/>
            <person name="Lai R.W."/>
            <person name="Woodhead J.S.T."/>
            <person name="Joly J.H."/>
            <person name="Mitchell C.J."/>
            <person name="Cameron-Smith D."/>
            <person name="Lu R."/>
            <person name="Cohen P."/>
            <person name="Graham N.A."/>
            <person name="Benayoun B.A."/>
            <person name="Merry T.L."/>
            <person name="Lee C."/>
        </authorList>
    </citation>
    <scope>SUBCELLULAR LOCATION</scope>
    <scope>INDUCTION</scope>
    <scope>ROLE IN PHYSICAL PERFORMANCE</scope>
</reference>
<reference evidence="18" key="16">
    <citation type="journal article" date="2015" name="Aging Cell">
        <title>The mitochondrial-derived peptide MOTS-c: a player in exceptional longevity?</title>
        <authorList>
            <person name="Fuku N."/>
            <person name="Pareja-Galeano H."/>
            <person name="Zempo H."/>
            <person name="Alis R."/>
            <person name="Arai Y."/>
            <person name="Lucia A."/>
            <person name="Hirose N."/>
        </authorList>
    </citation>
    <scope>VARIANT GLN-14</scope>
</reference>
<reference key="17">
    <citation type="journal article" date="2021" name="Aging (Albany NY)">
        <title>A pro-diabetogenic mtDNA polymorphism in the mitochondrial-derived peptide, MOTS-c.</title>
        <authorList>
            <person name="Zempo H."/>
            <person name="Kim S.J."/>
            <person name="Fuku N."/>
            <person name="Nishida Y."/>
            <person name="Higaki Y."/>
            <person name="Wan J."/>
            <person name="Yen K."/>
            <person name="Miller B."/>
            <person name="Vicinanza R."/>
            <person name="Miyamoto-Mikami E."/>
            <person name="Kumagai H."/>
            <person name="Naito H."/>
            <person name="Xiao J."/>
            <person name="Mehta H.H."/>
            <person name="Lee C."/>
            <person name="Hara M."/>
            <person name="Patel Y.M."/>
            <person name="Setiawan V.W."/>
            <person name="Moore T.M."/>
            <person name="Hevener A.L."/>
            <person name="Sutoh Y."/>
            <person name="Shimizu A."/>
            <person name="Kojima K."/>
            <person name="Kinoshita K."/>
            <person name="Arai Y."/>
            <person name="Hirose N."/>
            <person name="Maeda S."/>
            <person name="Tanaka K."/>
            <person name="Cohen P."/>
        </authorList>
    </citation>
    <scope>CHARACTERIZATION OF VARIANT GLN-14</scope>
    <scope>FUNCTION</scope>
    <scope>ROLE IN WEIGHT GAIN</scope>
</reference>
<sequence>MRWQEMGYIFYPRKLR</sequence>